<protein>
    <recommendedName>
        <fullName evidence="1">Exodeoxyribonuclease 7 large subunit</fullName>
        <ecNumber evidence="1">3.1.11.6</ecNumber>
    </recommendedName>
    <alternativeName>
        <fullName evidence="1">Exodeoxyribonuclease VII large subunit</fullName>
        <shortName evidence="1">Exonuclease VII large subunit</shortName>
    </alternativeName>
</protein>
<organism>
    <name type="scientific">Bacillus cereus (strain ATCC 14579 / DSM 31 / CCUG 7414 / JCM 2152 / NBRC 15305 / NCIMB 9373 / NCTC 2599 / NRRL B-3711)</name>
    <dbReference type="NCBI Taxonomy" id="226900"/>
    <lineage>
        <taxon>Bacteria</taxon>
        <taxon>Bacillati</taxon>
        <taxon>Bacillota</taxon>
        <taxon>Bacilli</taxon>
        <taxon>Bacillales</taxon>
        <taxon>Bacillaceae</taxon>
        <taxon>Bacillus</taxon>
        <taxon>Bacillus cereus group</taxon>
    </lineage>
</organism>
<accession>Q818R6</accession>
<reference key="1">
    <citation type="journal article" date="2003" name="Nature">
        <title>Genome sequence of Bacillus cereus and comparative analysis with Bacillus anthracis.</title>
        <authorList>
            <person name="Ivanova N."/>
            <person name="Sorokin A."/>
            <person name="Anderson I."/>
            <person name="Galleron N."/>
            <person name="Candelon B."/>
            <person name="Kapatral V."/>
            <person name="Bhattacharyya A."/>
            <person name="Reznik G."/>
            <person name="Mikhailova N."/>
            <person name="Lapidus A."/>
            <person name="Chu L."/>
            <person name="Mazur M."/>
            <person name="Goltsman E."/>
            <person name="Larsen N."/>
            <person name="D'Souza M."/>
            <person name="Walunas T."/>
            <person name="Grechkin Y."/>
            <person name="Pusch G."/>
            <person name="Haselkorn R."/>
            <person name="Fonstein M."/>
            <person name="Ehrlich S.D."/>
            <person name="Overbeek R."/>
            <person name="Kyrpides N.C."/>
        </authorList>
    </citation>
    <scope>NUCLEOTIDE SEQUENCE [LARGE SCALE GENOMIC DNA]</scope>
    <source>
        <strain>ATCC 14579 / DSM 31 / CCUG 7414 / JCM 2152 / NBRC 15305 / NCIMB 9373 / NCTC 2599 / NRRL B-3711</strain>
    </source>
</reference>
<feature type="chain" id="PRO_0000273641" description="Exodeoxyribonuclease 7 large subunit">
    <location>
        <begin position="1"/>
        <end position="452"/>
    </location>
</feature>
<proteinExistence type="inferred from homology"/>
<keyword id="KW-0963">Cytoplasm</keyword>
<keyword id="KW-0269">Exonuclease</keyword>
<keyword id="KW-0378">Hydrolase</keyword>
<keyword id="KW-0540">Nuclease</keyword>
<keyword id="KW-1185">Reference proteome</keyword>
<gene>
    <name evidence="1" type="primary">xseA</name>
    <name type="ordered locus">BC_4179</name>
</gene>
<name>EX7L_BACCR</name>
<dbReference type="EC" id="3.1.11.6" evidence="1"/>
<dbReference type="EMBL" id="AE016877">
    <property type="protein sequence ID" value="AAP11094.1"/>
    <property type="molecule type" value="Genomic_DNA"/>
</dbReference>
<dbReference type="RefSeq" id="NP_833893.1">
    <property type="nucleotide sequence ID" value="NC_004722.1"/>
</dbReference>
<dbReference type="RefSeq" id="WP_000415249.1">
    <property type="nucleotide sequence ID" value="NZ_CP138336.1"/>
</dbReference>
<dbReference type="SMR" id="Q818R6"/>
<dbReference type="STRING" id="226900.BC_4179"/>
<dbReference type="KEGG" id="bce:BC4179"/>
<dbReference type="PATRIC" id="fig|226900.8.peg.4319"/>
<dbReference type="HOGENOM" id="CLU_023625_3_1_9"/>
<dbReference type="OrthoDB" id="9802795at2"/>
<dbReference type="Proteomes" id="UP000001417">
    <property type="component" value="Chromosome"/>
</dbReference>
<dbReference type="GO" id="GO:0005737">
    <property type="term" value="C:cytoplasm"/>
    <property type="evidence" value="ECO:0007669"/>
    <property type="project" value="UniProtKB-SubCell"/>
</dbReference>
<dbReference type="GO" id="GO:0009318">
    <property type="term" value="C:exodeoxyribonuclease VII complex"/>
    <property type="evidence" value="ECO:0007669"/>
    <property type="project" value="InterPro"/>
</dbReference>
<dbReference type="GO" id="GO:0008855">
    <property type="term" value="F:exodeoxyribonuclease VII activity"/>
    <property type="evidence" value="ECO:0007669"/>
    <property type="project" value="UniProtKB-UniRule"/>
</dbReference>
<dbReference type="GO" id="GO:0003676">
    <property type="term" value="F:nucleic acid binding"/>
    <property type="evidence" value="ECO:0007669"/>
    <property type="project" value="InterPro"/>
</dbReference>
<dbReference type="GO" id="GO:0006308">
    <property type="term" value="P:DNA catabolic process"/>
    <property type="evidence" value="ECO:0007669"/>
    <property type="project" value="UniProtKB-UniRule"/>
</dbReference>
<dbReference type="CDD" id="cd04489">
    <property type="entry name" value="ExoVII_LU_OBF"/>
    <property type="match status" value="1"/>
</dbReference>
<dbReference type="HAMAP" id="MF_00378">
    <property type="entry name" value="Exonuc_7_L"/>
    <property type="match status" value="1"/>
</dbReference>
<dbReference type="InterPro" id="IPR003753">
    <property type="entry name" value="Exonuc_VII_L"/>
</dbReference>
<dbReference type="InterPro" id="IPR020579">
    <property type="entry name" value="Exonuc_VII_lsu_C"/>
</dbReference>
<dbReference type="InterPro" id="IPR025824">
    <property type="entry name" value="OB-fold_nuc-bd_dom"/>
</dbReference>
<dbReference type="NCBIfam" id="TIGR00237">
    <property type="entry name" value="xseA"/>
    <property type="match status" value="1"/>
</dbReference>
<dbReference type="PANTHER" id="PTHR30008">
    <property type="entry name" value="EXODEOXYRIBONUCLEASE 7 LARGE SUBUNIT"/>
    <property type="match status" value="1"/>
</dbReference>
<dbReference type="PANTHER" id="PTHR30008:SF0">
    <property type="entry name" value="EXODEOXYRIBONUCLEASE 7 LARGE SUBUNIT"/>
    <property type="match status" value="1"/>
</dbReference>
<dbReference type="Pfam" id="PF02601">
    <property type="entry name" value="Exonuc_VII_L"/>
    <property type="match status" value="1"/>
</dbReference>
<dbReference type="Pfam" id="PF13742">
    <property type="entry name" value="tRNA_anti_2"/>
    <property type="match status" value="1"/>
</dbReference>
<comment type="function">
    <text evidence="1">Bidirectionally degrades single-stranded DNA into large acid-insoluble oligonucleotides, which are then degraded further into small acid-soluble oligonucleotides.</text>
</comment>
<comment type="catalytic activity">
    <reaction evidence="1">
        <text>Exonucleolytic cleavage in either 5'- to 3'- or 3'- to 5'-direction to yield nucleoside 5'-phosphates.</text>
        <dbReference type="EC" id="3.1.11.6"/>
    </reaction>
</comment>
<comment type="subunit">
    <text evidence="1">Heterooligomer composed of large and small subunits.</text>
</comment>
<comment type="subcellular location">
    <subcellularLocation>
        <location evidence="1">Cytoplasm</location>
    </subcellularLocation>
</comment>
<comment type="similarity">
    <text evidence="1">Belongs to the XseA family.</text>
</comment>
<sequence length="452" mass="51310">MEKQYLTVTALTRYIKTKIEYDPHLQSVWLKGEISNFKNHSRGHMYFTLKDENARIAAVMFAGHNRNIKFKPENGMKVLVKGKISVYEASGSYQIYIQDMQPDGVGNLHLAYEQLKVRLEEEGLFSQVYKKAIPPYAKTIGVITSPTGAAIRDIITTIKRRYPIGNVIVFPVLVQGESAAPSIVQAIRTANEMGEIDVLIVGRGGGSIEELWAFNEEMVARAIFKSEIPIISAVGHETDFTIADFVADLRAPTPTAAAELAAPNIIELQEKVLQRTLRLQRAMRELVHKKEEKLQVLQKSYAFRYPRQVYEQKEEQLDRALEQLVLAKERYIDKKVNQLKQLSFYLEKHHPSQKIMQTKVAVETLQKQLQREMQTLLQTKEFAFVRAAQKLEALSPLKVMMRGYGLVYDEEKQVLKSVKDVSLGDAVSVQLQDGILDCSVSGIEERELNNGK</sequence>
<evidence type="ECO:0000255" key="1">
    <source>
        <dbReference type="HAMAP-Rule" id="MF_00378"/>
    </source>
</evidence>